<gene>
    <name evidence="1" type="primary">pth</name>
    <name type="ordered locus">Ssed_3468</name>
</gene>
<name>PTH_SHESH</name>
<sequence length="194" mass="21126">MSNIKLIVGLANPGDKYAQTRHNAGAWYVQELARVCGATLVADSKYYGLTARVTLHGKDVRLLIPSTFMNLSGKSVGALANFFRIEPEEILVAHDELDMQPGVAKFKLGGGHGGHNGLKDIIAKLANNKGFYRLRIGIGHPGDKNQVSNYVLGKAPASEQTLIETVIDEAVRSTELLFNEDMAKAMHRLHSFKG</sequence>
<comment type="function">
    <text evidence="1">Hydrolyzes ribosome-free peptidyl-tRNAs (with 1 or more amino acids incorporated), which drop off the ribosome during protein synthesis, or as a result of ribosome stalling.</text>
</comment>
<comment type="function">
    <text evidence="1">Catalyzes the release of premature peptidyl moieties from peptidyl-tRNA molecules trapped in stalled 50S ribosomal subunits, and thus maintains levels of free tRNAs and 50S ribosomes.</text>
</comment>
<comment type="catalytic activity">
    <reaction evidence="1">
        <text>an N-acyl-L-alpha-aminoacyl-tRNA + H2O = an N-acyl-L-amino acid + a tRNA + H(+)</text>
        <dbReference type="Rhea" id="RHEA:54448"/>
        <dbReference type="Rhea" id="RHEA-COMP:10123"/>
        <dbReference type="Rhea" id="RHEA-COMP:13883"/>
        <dbReference type="ChEBI" id="CHEBI:15377"/>
        <dbReference type="ChEBI" id="CHEBI:15378"/>
        <dbReference type="ChEBI" id="CHEBI:59874"/>
        <dbReference type="ChEBI" id="CHEBI:78442"/>
        <dbReference type="ChEBI" id="CHEBI:138191"/>
        <dbReference type="EC" id="3.1.1.29"/>
    </reaction>
</comment>
<comment type="subunit">
    <text evidence="1">Monomer.</text>
</comment>
<comment type="subcellular location">
    <subcellularLocation>
        <location evidence="1">Cytoplasm</location>
    </subcellularLocation>
</comment>
<comment type="similarity">
    <text evidence="1">Belongs to the PTH family.</text>
</comment>
<protein>
    <recommendedName>
        <fullName evidence="1">Peptidyl-tRNA hydrolase</fullName>
        <shortName evidence="1">Pth</shortName>
        <ecNumber evidence="1">3.1.1.29</ecNumber>
    </recommendedName>
</protein>
<reference key="1">
    <citation type="submission" date="2007-08" db="EMBL/GenBank/DDBJ databases">
        <title>Complete sequence of Shewanella sediminis HAW-EB3.</title>
        <authorList>
            <consortium name="US DOE Joint Genome Institute"/>
            <person name="Copeland A."/>
            <person name="Lucas S."/>
            <person name="Lapidus A."/>
            <person name="Barry K."/>
            <person name="Glavina del Rio T."/>
            <person name="Dalin E."/>
            <person name="Tice H."/>
            <person name="Pitluck S."/>
            <person name="Chertkov O."/>
            <person name="Brettin T."/>
            <person name="Bruce D."/>
            <person name="Detter J.C."/>
            <person name="Han C."/>
            <person name="Schmutz J."/>
            <person name="Larimer F."/>
            <person name="Land M."/>
            <person name="Hauser L."/>
            <person name="Kyrpides N."/>
            <person name="Kim E."/>
            <person name="Zhao J.-S."/>
            <person name="Richardson P."/>
        </authorList>
    </citation>
    <scope>NUCLEOTIDE SEQUENCE [LARGE SCALE GENOMIC DNA]</scope>
    <source>
        <strain>HAW-EB3</strain>
    </source>
</reference>
<accession>A8FYZ9</accession>
<organism>
    <name type="scientific">Shewanella sediminis (strain HAW-EB3)</name>
    <dbReference type="NCBI Taxonomy" id="425104"/>
    <lineage>
        <taxon>Bacteria</taxon>
        <taxon>Pseudomonadati</taxon>
        <taxon>Pseudomonadota</taxon>
        <taxon>Gammaproteobacteria</taxon>
        <taxon>Alteromonadales</taxon>
        <taxon>Shewanellaceae</taxon>
        <taxon>Shewanella</taxon>
    </lineage>
</organism>
<feature type="chain" id="PRO_1000075357" description="Peptidyl-tRNA hydrolase">
    <location>
        <begin position="1"/>
        <end position="194"/>
    </location>
</feature>
<feature type="active site" description="Proton acceptor" evidence="1">
    <location>
        <position position="22"/>
    </location>
</feature>
<feature type="binding site" evidence="1">
    <location>
        <position position="17"/>
    </location>
    <ligand>
        <name>tRNA</name>
        <dbReference type="ChEBI" id="CHEBI:17843"/>
    </ligand>
</feature>
<feature type="binding site" evidence="1">
    <location>
        <position position="68"/>
    </location>
    <ligand>
        <name>tRNA</name>
        <dbReference type="ChEBI" id="CHEBI:17843"/>
    </ligand>
</feature>
<feature type="binding site" evidence="1">
    <location>
        <position position="70"/>
    </location>
    <ligand>
        <name>tRNA</name>
        <dbReference type="ChEBI" id="CHEBI:17843"/>
    </ligand>
</feature>
<feature type="binding site" evidence="1">
    <location>
        <position position="116"/>
    </location>
    <ligand>
        <name>tRNA</name>
        <dbReference type="ChEBI" id="CHEBI:17843"/>
    </ligand>
</feature>
<feature type="site" description="Discriminates between blocked and unblocked aminoacyl-tRNA" evidence="1">
    <location>
        <position position="12"/>
    </location>
</feature>
<feature type="site" description="Stabilizes the basic form of H active site to accept a proton" evidence="1">
    <location>
        <position position="95"/>
    </location>
</feature>
<proteinExistence type="inferred from homology"/>
<evidence type="ECO:0000255" key="1">
    <source>
        <dbReference type="HAMAP-Rule" id="MF_00083"/>
    </source>
</evidence>
<dbReference type="EC" id="3.1.1.29" evidence="1"/>
<dbReference type="EMBL" id="CP000821">
    <property type="protein sequence ID" value="ABV38072.1"/>
    <property type="molecule type" value="Genomic_DNA"/>
</dbReference>
<dbReference type="RefSeq" id="WP_012143802.1">
    <property type="nucleotide sequence ID" value="NC_009831.1"/>
</dbReference>
<dbReference type="SMR" id="A8FYZ9"/>
<dbReference type="STRING" id="425104.Ssed_3468"/>
<dbReference type="KEGG" id="sse:Ssed_3468"/>
<dbReference type="eggNOG" id="COG0193">
    <property type="taxonomic scope" value="Bacteria"/>
</dbReference>
<dbReference type="HOGENOM" id="CLU_062456_3_1_6"/>
<dbReference type="OrthoDB" id="9800507at2"/>
<dbReference type="Proteomes" id="UP000002015">
    <property type="component" value="Chromosome"/>
</dbReference>
<dbReference type="GO" id="GO:0005737">
    <property type="term" value="C:cytoplasm"/>
    <property type="evidence" value="ECO:0007669"/>
    <property type="project" value="UniProtKB-SubCell"/>
</dbReference>
<dbReference type="GO" id="GO:0004045">
    <property type="term" value="F:peptidyl-tRNA hydrolase activity"/>
    <property type="evidence" value="ECO:0007669"/>
    <property type="project" value="UniProtKB-UniRule"/>
</dbReference>
<dbReference type="GO" id="GO:0000049">
    <property type="term" value="F:tRNA binding"/>
    <property type="evidence" value="ECO:0007669"/>
    <property type="project" value="UniProtKB-UniRule"/>
</dbReference>
<dbReference type="GO" id="GO:0006515">
    <property type="term" value="P:protein quality control for misfolded or incompletely synthesized proteins"/>
    <property type="evidence" value="ECO:0007669"/>
    <property type="project" value="UniProtKB-UniRule"/>
</dbReference>
<dbReference type="GO" id="GO:0072344">
    <property type="term" value="P:rescue of stalled ribosome"/>
    <property type="evidence" value="ECO:0007669"/>
    <property type="project" value="UniProtKB-UniRule"/>
</dbReference>
<dbReference type="CDD" id="cd00462">
    <property type="entry name" value="PTH"/>
    <property type="match status" value="1"/>
</dbReference>
<dbReference type="FunFam" id="3.40.50.1470:FF:000001">
    <property type="entry name" value="Peptidyl-tRNA hydrolase"/>
    <property type="match status" value="1"/>
</dbReference>
<dbReference type="Gene3D" id="3.40.50.1470">
    <property type="entry name" value="Peptidyl-tRNA hydrolase"/>
    <property type="match status" value="1"/>
</dbReference>
<dbReference type="HAMAP" id="MF_00083">
    <property type="entry name" value="Pept_tRNA_hydro_bact"/>
    <property type="match status" value="1"/>
</dbReference>
<dbReference type="InterPro" id="IPR001328">
    <property type="entry name" value="Pept_tRNA_hydro"/>
</dbReference>
<dbReference type="InterPro" id="IPR018171">
    <property type="entry name" value="Pept_tRNA_hydro_CS"/>
</dbReference>
<dbReference type="InterPro" id="IPR036416">
    <property type="entry name" value="Pept_tRNA_hydro_sf"/>
</dbReference>
<dbReference type="NCBIfam" id="TIGR00447">
    <property type="entry name" value="pth"/>
    <property type="match status" value="1"/>
</dbReference>
<dbReference type="PANTHER" id="PTHR17224">
    <property type="entry name" value="PEPTIDYL-TRNA HYDROLASE"/>
    <property type="match status" value="1"/>
</dbReference>
<dbReference type="PANTHER" id="PTHR17224:SF1">
    <property type="entry name" value="PEPTIDYL-TRNA HYDROLASE"/>
    <property type="match status" value="1"/>
</dbReference>
<dbReference type="Pfam" id="PF01195">
    <property type="entry name" value="Pept_tRNA_hydro"/>
    <property type="match status" value="1"/>
</dbReference>
<dbReference type="SUPFAM" id="SSF53178">
    <property type="entry name" value="Peptidyl-tRNA hydrolase-like"/>
    <property type="match status" value="1"/>
</dbReference>
<dbReference type="PROSITE" id="PS01196">
    <property type="entry name" value="PEPT_TRNA_HYDROL_2"/>
    <property type="match status" value="1"/>
</dbReference>
<keyword id="KW-0963">Cytoplasm</keyword>
<keyword id="KW-0378">Hydrolase</keyword>
<keyword id="KW-1185">Reference proteome</keyword>
<keyword id="KW-0694">RNA-binding</keyword>
<keyword id="KW-0820">tRNA-binding</keyword>